<sequence length="1138" mass="124823">MKLFPRSILIILVLSFALNLGLVTKTHAKDTLDSIVDILSGLTCETQGVGDLLRTEFSHTCIVAPFFTFAVMNLVSPVLYMNTFLKLKINDSDLFNDSNFGNFPGGQCTRENRIDPKNPELRFALCNNAKLIVSRAKSVAESALAIAKAVLTGGDPWDDIKKAWENKKKEYHIPYSGKPGDDGFAFDAGFPVIYWKIIQDKDRICVSTKGFTGDVPVGCKYMKEPFPKSMYNSFMDVADKDFIQDPKETPTDPLALVSCSAAGGGCYQKAYNASKTAVVMTSPLIECMRQMIARLLISKDVCSFDNVEQVVNLASRQDSALFQFQVGMYKIVTAFLTLYVMFFGFKLLLAGEIPPKSEYINFILKMIFVTYFSIGINITPGNGSPYDRLDGMIQWAFPFLLDGINGLASWVMNAAPSGLCKFNNLSYDGTVSYIALWDALDCRVAHYLGLDILSTLLVENAYRSHDFLNFDFFSFSAPPYIYLLIPAIISGNMMLVSLALSYPLLVISVAAFMVNATIMCMISIVILGILAPLFVPMFLFTYTRNYFDSWVKLMISFLLQPMVVVTFMITMFSVYDYGFYGKCQYKSKLIHNSIENLAQSGGTSSRDVLIFYINNDWDDISQYPDKDAVESCQNSLGYMLNNPITTAFNFAKDSVSEIVDSKPGDTPTDKFLAKFQFLSGVVLGPGMFFMSPKVLFEKIKNILLALVTACFTLYLMYNFSSQLAEFAADMTEGVALNNVAIKPQAIFKAGMAALAAAGAATKGVDQIASRGGVGDLKAGQGGGVSDNIAKSGGGGPNDNIAASGGTSAPTVTTPTASSSVATSSPKTVSSEARSDVVTPPPAPSEAVSPPPASIRTSISTPAPQSNIETESVGKIIRDNNQESKKEIDNTPPPQEKVDNAAPQEKVDSTSKGTGVIDYSFNLKEHENPAGVKQIRENAEIRDKRAEVEKAWNELVASGGGRIRDQQGEETSERRTNAEKKWNELVDSGVVTEIRERDNSVTNKFDKLADELNKSEKAKVEENKNIENDRKENNTTTSPQEKVDSTSRGSGVIDYSFNLKEHENPTGVKQIRENAEIRDKRVKVETAWNELVASGGGRVREQEGGEVSERRANAVKTWDELVKSGVVTEKKDNSSNENS</sequence>
<organism>
    <name type="scientific">Rickettsia felis (strain ATCC VR-1525 / URRWXCal2)</name>
    <name type="common">Rickettsia azadi</name>
    <dbReference type="NCBI Taxonomy" id="315456"/>
    <lineage>
        <taxon>Bacteria</taxon>
        <taxon>Pseudomonadati</taxon>
        <taxon>Pseudomonadota</taxon>
        <taxon>Alphaproteobacteria</taxon>
        <taxon>Rickettsiales</taxon>
        <taxon>Rickettsiaceae</taxon>
        <taxon>Rickettsieae</taxon>
        <taxon>Rickettsia</taxon>
        <taxon>spotted fever group</taxon>
    </lineage>
</organism>
<dbReference type="EMBL" id="CP000053">
    <property type="protein sequence ID" value="AAY60940.1"/>
    <property type="molecule type" value="Genomic_DNA"/>
</dbReference>
<dbReference type="STRING" id="315456.RF_0089"/>
<dbReference type="KEGG" id="rfe:RF_0089"/>
<dbReference type="eggNOG" id="COG3704">
    <property type="taxonomic scope" value="Bacteria"/>
</dbReference>
<dbReference type="HOGENOM" id="CLU_279905_0_0_5"/>
<dbReference type="OrthoDB" id="7163542at2"/>
<dbReference type="Proteomes" id="UP000008548">
    <property type="component" value="Chromosome"/>
</dbReference>
<dbReference type="GO" id="GO:0005886">
    <property type="term" value="C:plasma membrane"/>
    <property type="evidence" value="ECO:0007669"/>
    <property type="project" value="UniProtKB-SubCell"/>
</dbReference>
<dbReference type="GO" id="GO:0030255">
    <property type="term" value="P:protein secretion by the type IV secretion system"/>
    <property type="evidence" value="ECO:0007669"/>
    <property type="project" value="InterPro"/>
</dbReference>
<dbReference type="InterPro" id="IPR007688">
    <property type="entry name" value="Conjugal_tfr_TrbL/VirB6"/>
</dbReference>
<dbReference type="Pfam" id="PF04610">
    <property type="entry name" value="TrbL"/>
    <property type="match status" value="1"/>
</dbReference>
<protein>
    <recommendedName>
        <fullName>Uncharacterized protein RF_0089</fullName>
    </recommendedName>
</protein>
<accession>Q4UNB8</accession>
<gene>
    <name type="ordered locus">RF_0089</name>
</gene>
<name>Y089_RICFE</name>
<comment type="subcellular location">
    <subcellularLocation>
        <location evidence="3">Cell membrane</location>
        <topology evidence="3">Multi-pass membrane protein</topology>
    </subcellularLocation>
</comment>
<comment type="similarity">
    <text evidence="3">Belongs to the TrbL/VirB6 family.</text>
</comment>
<evidence type="ECO:0000255" key="1"/>
<evidence type="ECO:0000256" key="2">
    <source>
        <dbReference type="SAM" id="MobiDB-lite"/>
    </source>
</evidence>
<evidence type="ECO:0000305" key="3"/>
<keyword id="KW-1003">Cell membrane</keyword>
<keyword id="KW-0472">Membrane</keyword>
<keyword id="KW-0732">Signal</keyword>
<keyword id="KW-0812">Transmembrane</keyword>
<keyword id="KW-1133">Transmembrane helix</keyword>
<proteinExistence type="inferred from homology"/>
<reference key="1">
    <citation type="journal article" date="2005" name="PLoS Biol.">
        <title>The genome sequence of Rickettsia felis identifies the first putative conjugative plasmid in an obligate intracellular parasite.</title>
        <authorList>
            <person name="Ogata H."/>
            <person name="Renesto P."/>
            <person name="Audic S."/>
            <person name="Robert C."/>
            <person name="Blanc G."/>
            <person name="Fournier P.-E."/>
            <person name="Parinello H."/>
            <person name="Claverie J.-M."/>
            <person name="Raoult D."/>
        </authorList>
    </citation>
    <scope>NUCLEOTIDE SEQUENCE [LARGE SCALE GENOMIC DNA]</scope>
    <source>
        <strain>ATCC VR-1525 / URRWXCal2</strain>
    </source>
</reference>
<feature type="signal peptide" evidence="1">
    <location>
        <begin position="1"/>
        <end position="28"/>
    </location>
</feature>
<feature type="chain" id="PRO_0000269204" description="Uncharacterized protein RF_0089">
    <location>
        <begin position="29"/>
        <end position="1138"/>
    </location>
</feature>
<feature type="transmembrane region" description="Helical" evidence="1">
    <location>
        <begin position="331"/>
        <end position="351"/>
    </location>
</feature>
<feature type="transmembrane region" description="Helical" evidence="1">
    <location>
        <begin position="359"/>
        <end position="379"/>
    </location>
</feature>
<feature type="transmembrane region" description="Helical" evidence="1">
    <location>
        <begin position="392"/>
        <end position="412"/>
    </location>
</feature>
<feature type="transmembrane region" description="Helical" evidence="1">
    <location>
        <begin position="494"/>
        <end position="514"/>
    </location>
</feature>
<feature type="transmembrane region" description="Helical" evidence="1">
    <location>
        <begin position="520"/>
        <end position="540"/>
    </location>
</feature>
<feature type="transmembrane region" description="Helical" evidence="1">
    <location>
        <begin position="554"/>
        <end position="574"/>
    </location>
</feature>
<feature type="transmembrane region" description="Helical" evidence="1">
    <location>
        <begin position="699"/>
        <end position="719"/>
    </location>
</feature>
<feature type="region of interest" description="Disordered" evidence="2">
    <location>
        <begin position="775"/>
        <end position="914"/>
    </location>
</feature>
<feature type="region of interest" description="Disordered" evidence="2">
    <location>
        <begin position="958"/>
        <end position="977"/>
    </location>
</feature>
<feature type="region of interest" description="Disordered" evidence="2">
    <location>
        <begin position="995"/>
        <end position="1071"/>
    </location>
</feature>
<feature type="compositionally biased region" description="Gly residues" evidence="2">
    <location>
        <begin position="775"/>
        <end position="784"/>
    </location>
</feature>
<feature type="compositionally biased region" description="Low complexity" evidence="2">
    <location>
        <begin position="801"/>
        <end position="830"/>
    </location>
</feature>
<feature type="compositionally biased region" description="Pro residues" evidence="2">
    <location>
        <begin position="838"/>
        <end position="852"/>
    </location>
</feature>
<feature type="compositionally biased region" description="Polar residues" evidence="2">
    <location>
        <begin position="854"/>
        <end position="869"/>
    </location>
</feature>
<feature type="compositionally biased region" description="Basic and acidic residues" evidence="2">
    <location>
        <begin position="875"/>
        <end position="888"/>
    </location>
</feature>
<feature type="compositionally biased region" description="Basic and acidic residues" evidence="2">
    <location>
        <begin position="961"/>
        <end position="977"/>
    </location>
</feature>
<feature type="compositionally biased region" description="Basic and acidic residues" evidence="2">
    <location>
        <begin position="995"/>
        <end position="1032"/>
    </location>
</feature>
<feature type="compositionally biased region" description="Basic and acidic residues" evidence="2">
    <location>
        <begin position="1058"/>
        <end position="1071"/>
    </location>
</feature>